<protein>
    <recommendedName>
        <fullName evidence="1">Eukaryotic translation initiation factor 3 subunit I</fullName>
        <shortName evidence="1">eIF3i</shortName>
    </recommendedName>
    <alternativeName>
        <fullName evidence="1">Eukaryotic translation initiation factor 3 39 kDa subunit homolog</fullName>
        <shortName evidence="1">eIF-3 39 kDa subunit homolog</shortName>
    </alternativeName>
</protein>
<dbReference type="EMBL" id="AAEY01000003">
    <property type="protein sequence ID" value="EAL23222.1"/>
    <property type="status" value="ALT_SEQ"/>
    <property type="molecule type" value="Genomic_DNA"/>
</dbReference>
<dbReference type="RefSeq" id="XP_777869.1">
    <property type="nucleotide sequence ID" value="XM_772776.1"/>
</dbReference>
<dbReference type="SMR" id="P0CS33"/>
<dbReference type="EnsemblFungi" id="AAW41436">
    <property type="protein sequence ID" value="AAW41436"/>
    <property type="gene ID" value="CNA05850"/>
</dbReference>
<dbReference type="GeneID" id="4933830"/>
<dbReference type="KEGG" id="cnb:CNBA5660"/>
<dbReference type="HOGENOM" id="CLU_043845_0_1_1"/>
<dbReference type="OrthoDB" id="1185at5206"/>
<dbReference type="GO" id="GO:0016282">
    <property type="term" value="C:eukaryotic 43S preinitiation complex"/>
    <property type="evidence" value="ECO:0007669"/>
    <property type="project" value="UniProtKB-UniRule"/>
</dbReference>
<dbReference type="GO" id="GO:0033290">
    <property type="term" value="C:eukaryotic 48S preinitiation complex"/>
    <property type="evidence" value="ECO:0007669"/>
    <property type="project" value="UniProtKB-UniRule"/>
</dbReference>
<dbReference type="GO" id="GO:0071540">
    <property type="term" value="C:eukaryotic translation initiation factor 3 complex, eIF3e"/>
    <property type="evidence" value="ECO:0007669"/>
    <property type="project" value="EnsemblFungi"/>
</dbReference>
<dbReference type="GO" id="GO:0071541">
    <property type="term" value="C:eukaryotic translation initiation factor 3 complex, eIF3m"/>
    <property type="evidence" value="ECO:0007669"/>
    <property type="project" value="EnsemblFungi"/>
</dbReference>
<dbReference type="GO" id="GO:0034399">
    <property type="term" value="C:nuclear periphery"/>
    <property type="evidence" value="ECO:0007669"/>
    <property type="project" value="EnsemblFungi"/>
</dbReference>
<dbReference type="GO" id="GO:0003723">
    <property type="term" value="F:RNA binding"/>
    <property type="evidence" value="ECO:0007669"/>
    <property type="project" value="TreeGrafter"/>
</dbReference>
<dbReference type="GO" id="GO:0003743">
    <property type="term" value="F:translation initiation factor activity"/>
    <property type="evidence" value="ECO:0007669"/>
    <property type="project" value="UniProtKB-UniRule"/>
</dbReference>
<dbReference type="GO" id="GO:0001732">
    <property type="term" value="P:formation of cytoplasmic translation initiation complex"/>
    <property type="evidence" value="ECO:0007669"/>
    <property type="project" value="UniProtKB-UniRule"/>
</dbReference>
<dbReference type="CDD" id="cd00200">
    <property type="entry name" value="WD40"/>
    <property type="match status" value="1"/>
</dbReference>
<dbReference type="Gene3D" id="2.130.10.10">
    <property type="entry name" value="YVTN repeat-like/Quinoprotein amine dehydrogenase"/>
    <property type="match status" value="1"/>
</dbReference>
<dbReference type="HAMAP" id="MF_03008">
    <property type="entry name" value="eIF3i"/>
    <property type="match status" value="1"/>
</dbReference>
<dbReference type="InterPro" id="IPR027525">
    <property type="entry name" value="eIF3i"/>
</dbReference>
<dbReference type="InterPro" id="IPR020472">
    <property type="entry name" value="G-protein_beta_WD-40_rep"/>
</dbReference>
<dbReference type="InterPro" id="IPR015943">
    <property type="entry name" value="WD40/YVTN_repeat-like_dom_sf"/>
</dbReference>
<dbReference type="InterPro" id="IPR019775">
    <property type="entry name" value="WD40_repeat_CS"/>
</dbReference>
<dbReference type="InterPro" id="IPR036322">
    <property type="entry name" value="WD40_repeat_dom_sf"/>
</dbReference>
<dbReference type="InterPro" id="IPR001680">
    <property type="entry name" value="WD40_rpt"/>
</dbReference>
<dbReference type="PANTHER" id="PTHR19877">
    <property type="entry name" value="EUKARYOTIC TRANSLATION INITIATION FACTOR 3 SUBUNIT I"/>
    <property type="match status" value="1"/>
</dbReference>
<dbReference type="PANTHER" id="PTHR19877:SF1">
    <property type="entry name" value="EUKARYOTIC TRANSLATION INITIATION FACTOR 3 SUBUNIT I"/>
    <property type="match status" value="1"/>
</dbReference>
<dbReference type="Pfam" id="PF24805">
    <property type="entry name" value="EIF3I"/>
    <property type="match status" value="1"/>
</dbReference>
<dbReference type="PRINTS" id="PR00320">
    <property type="entry name" value="GPROTEINBRPT"/>
</dbReference>
<dbReference type="SMART" id="SM00320">
    <property type="entry name" value="WD40"/>
    <property type="match status" value="7"/>
</dbReference>
<dbReference type="SUPFAM" id="SSF50978">
    <property type="entry name" value="WD40 repeat-like"/>
    <property type="match status" value="1"/>
</dbReference>
<dbReference type="PROSITE" id="PS00678">
    <property type="entry name" value="WD_REPEATS_1"/>
    <property type="match status" value="1"/>
</dbReference>
<dbReference type="PROSITE" id="PS50082">
    <property type="entry name" value="WD_REPEATS_2"/>
    <property type="match status" value="4"/>
</dbReference>
<dbReference type="PROSITE" id="PS50294">
    <property type="entry name" value="WD_REPEATS_REGION"/>
    <property type="match status" value="1"/>
</dbReference>
<sequence length="341" mass="38003">MKPIILQGHERSLNQIVFNSEGDLLFSASKDSVVNAWYTSNGERLGTYGGIKGGDGHNGSVWTVAVDSQTRFLLTGGADNAMKLWEVKTGECLYTWEFLTAVKRVAWNEDDDMFLSITEQRSGQPSVIRIFSINREDPRSQSTTPITEMRLSGSRATVAIWAPLSDYIITGHESGKIAKYDVKTGEEVQAVEDEHSALISDIQLSPDGTYFITASKDKTARLWDIETLEVMKVYTTETPVNSAVITPDRPYIILGGGQDAMNVTTTSQRAGKFESRFFHKLFEEEVGRVKGHFGPINTLSVHPQGRAYASGAEDGFVRVHWFEESYFRSRPFGDLEPEPEV</sequence>
<name>EIF3I_CRYNB</name>
<evidence type="ECO:0000255" key="1">
    <source>
        <dbReference type="HAMAP-Rule" id="MF_03008"/>
    </source>
</evidence>
<evidence type="ECO:0000305" key="2"/>
<reference key="1">
    <citation type="journal article" date="2005" name="Science">
        <title>The genome of the basidiomycetous yeast and human pathogen Cryptococcus neoformans.</title>
        <authorList>
            <person name="Loftus B.J."/>
            <person name="Fung E."/>
            <person name="Roncaglia P."/>
            <person name="Rowley D."/>
            <person name="Amedeo P."/>
            <person name="Bruno D."/>
            <person name="Vamathevan J."/>
            <person name="Miranda M."/>
            <person name="Anderson I.J."/>
            <person name="Fraser J.A."/>
            <person name="Allen J.E."/>
            <person name="Bosdet I.E."/>
            <person name="Brent M.R."/>
            <person name="Chiu R."/>
            <person name="Doering T.L."/>
            <person name="Donlin M.J."/>
            <person name="D'Souza C.A."/>
            <person name="Fox D.S."/>
            <person name="Grinberg V."/>
            <person name="Fu J."/>
            <person name="Fukushima M."/>
            <person name="Haas B.J."/>
            <person name="Huang J.C."/>
            <person name="Janbon G."/>
            <person name="Jones S.J.M."/>
            <person name="Koo H.L."/>
            <person name="Krzywinski M.I."/>
            <person name="Kwon-Chung K.J."/>
            <person name="Lengeler K.B."/>
            <person name="Maiti R."/>
            <person name="Marra M.A."/>
            <person name="Marra R.E."/>
            <person name="Mathewson C.A."/>
            <person name="Mitchell T.G."/>
            <person name="Pertea M."/>
            <person name="Riggs F.R."/>
            <person name="Salzberg S.L."/>
            <person name="Schein J.E."/>
            <person name="Shvartsbeyn A."/>
            <person name="Shin H."/>
            <person name="Shumway M."/>
            <person name="Specht C.A."/>
            <person name="Suh B.B."/>
            <person name="Tenney A."/>
            <person name="Utterback T.R."/>
            <person name="Wickes B.L."/>
            <person name="Wortman J.R."/>
            <person name="Wye N.H."/>
            <person name="Kronstad J.W."/>
            <person name="Lodge J.K."/>
            <person name="Heitman J."/>
            <person name="Davis R.W."/>
            <person name="Fraser C.M."/>
            <person name="Hyman R.W."/>
        </authorList>
    </citation>
    <scope>NUCLEOTIDE SEQUENCE [LARGE SCALE GENOMIC DNA]</scope>
    <source>
        <strain>B-3501A</strain>
    </source>
</reference>
<accession>P0CS33</accession>
<accession>Q55ZC3</accession>
<accession>Q5KNN8</accession>
<comment type="function">
    <text evidence="1">Component of the eukaryotic translation initiation factor 3 (eIF-3) complex, which is involved in protein synthesis of a specialized repertoire of mRNAs and, together with other initiation factors, stimulates binding of mRNA and methionyl-tRNAi to the 40S ribosome. The eIF-3 complex specifically targets and initiates translation of a subset of mRNAs involved in cell proliferation.</text>
</comment>
<comment type="subunit">
    <text evidence="1">Component of the eukaryotic translation initiation factor 3 (eIF-3) complex.</text>
</comment>
<comment type="subcellular location">
    <subcellularLocation>
        <location evidence="1">Cytoplasm</location>
    </subcellularLocation>
</comment>
<comment type="similarity">
    <text evidence="1">Belongs to the eIF-3 subunit I family.</text>
</comment>
<comment type="sequence caution" evidence="2">
    <conflict type="erroneous gene model prediction">
        <sequence resource="EMBL-CDS" id="EAL23222"/>
    </conflict>
</comment>
<organism>
    <name type="scientific">Cryptococcus neoformans var. neoformans serotype D (strain B-3501A)</name>
    <name type="common">Filobasidiella neoformans</name>
    <dbReference type="NCBI Taxonomy" id="283643"/>
    <lineage>
        <taxon>Eukaryota</taxon>
        <taxon>Fungi</taxon>
        <taxon>Dikarya</taxon>
        <taxon>Basidiomycota</taxon>
        <taxon>Agaricomycotina</taxon>
        <taxon>Tremellomycetes</taxon>
        <taxon>Tremellales</taxon>
        <taxon>Cryptococcaceae</taxon>
        <taxon>Cryptococcus</taxon>
        <taxon>Cryptococcus neoformans species complex</taxon>
    </lineage>
</organism>
<proteinExistence type="inferred from homology"/>
<keyword id="KW-0963">Cytoplasm</keyword>
<keyword id="KW-0396">Initiation factor</keyword>
<keyword id="KW-0648">Protein biosynthesis</keyword>
<keyword id="KW-0677">Repeat</keyword>
<keyword id="KW-0853">WD repeat</keyword>
<feature type="chain" id="PRO_0000410329" description="Eukaryotic translation initiation factor 3 subunit I">
    <location>
        <begin position="1"/>
        <end position="341"/>
    </location>
</feature>
<feature type="repeat" description="WD 1">
    <location>
        <begin position="8"/>
        <end position="47"/>
    </location>
</feature>
<feature type="repeat" description="WD 2">
    <location>
        <begin position="56"/>
        <end position="95"/>
    </location>
</feature>
<feature type="repeat" description="WD 3">
    <location>
        <begin position="151"/>
        <end position="190"/>
    </location>
</feature>
<feature type="repeat" description="WD 4">
    <location>
        <begin position="194"/>
        <end position="233"/>
    </location>
</feature>
<feature type="repeat" description="WD 5">
    <location>
        <begin position="235"/>
        <end position="274"/>
    </location>
</feature>
<feature type="repeat" description="WD 6">
    <location>
        <begin position="291"/>
        <end position="331"/>
    </location>
</feature>
<gene>
    <name evidence="1" type="primary">TIF34</name>
    <name type="ordered locus">CNBA5660</name>
</gene>